<dbReference type="EMBL" id="CP000492">
    <property type="protein sequence ID" value="ABL65545.1"/>
    <property type="molecule type" value="Genomic_DNA"/>
</dbReference>
<dbReference type="RefSeq" id="WP_011745357.1">
    <property type="nucleotide sequence ID" value="NC_008639.1"/>
</dbReference>
<dbReference type="SMR" id="A1BGL8"/>
<dbReference type="STRING" id="290317.Cpha266_1523"/>
<dbReference type="KEGG" id="cph:Cpha266_1523"/>
<dbReference type="eggNOG" id="COG0806">
    <property type="taxonomic scope" value="Bacteria"/>
</dbReference>
<dbReference type="HOGENOM" id="CLU_077636_3_2_10"/>
<dbReference type="OrthoDB" id="9810331at2"/>
<dbReference type="Proteomes" id="UP000008701">
    <property type="component" value="Chromosome"/>
</dbReference>
<dbReference type="GO" id="GO:0005737">
    <property type="term" value="C:cytoplasm"/>
    <property type="evidence" value="ECO:0007669"/>
    <property type="project" value="UniProtKB-SubCell"/>
</dbReference>
<dbReference type="GO" id="GO:0005840">
    <property type="term" value="C:ribosome"/>
    <property type="evidence" value="ECO:0007669"/>
    <property type="project" value="InterPro"/>
</dbReference>
<dbReference type="GO" id="GO:0043022">
    <property type="term" value="F:ribosome binding"/>
    <property type="evidence" value="ECO:0007669"/>
    <property type="project" value="InterPro"/>
</dbReference>
<dbReference type="GO" id="GO:0042274">
    <property type="term" value="P:ribosomal small subunit biogenesis"/>
    <property type="evidence" value="ECO:0007669"/>
    <property type="project" value="UniProtKB-UniRule"/>
</dbReference>
<dbReference type="GO" id="GO:0006364">
    <property type="term" value="P:rRNA processing"/>
    <property type="evidence" value="ECO:0007669"/>
    <property type="project" value="UniProtKB-UniRule"/>
</dbReference>
<dbReference type="Gene3D" id="2.30.30.240">
    <property type="entry name" value="PRC-barrel domain"/>
    <property type="match status" value="1"/>
</dbReference>
<dbReference type="Gene3D" id="2.40.30.60">
    <property type="entry name" value="RimM"/>
    <property type="match status" value="1"/>
</dbReference>
<dbReference type="HAMAP" id="MF_00014">
    <property type="entry name" value="Ribosome_mat_RimM"/>
    <property type="match status" value="1"/>
</dbReference>
<dbReference type="InterPro" id="IPR011033">
    <property type="entry name" value="PRC_barrel-like_sf"/>
</dbReference>
<dbReference type="InterPro" id="IPR056792">
    <property type="entry name" value="PRC_RimM"/>
</dbReference>
<dbReference type="InterPro" id="IPR011961">
    <property type="entry name" value="RimM"/>
</dbReference>
<dbReference type="InterPro" id="IPR002676">
    <property type="entry name" value="RimM_N"/>
</dbReference>
<dbReference type="InterPro" id="IPR036976">
    <property type="entry name" value="RimM_N_sf"/>
</dbReference>
<dbReference type="InterPro" id="IPR009000">
    <property type="entry name" value="Transl_B-barrel_sf"/>
</dbReference>
<dbReference type="NCBIfam" id="TIGR02273">
    <property type="entry name" value="16S_RimM"/>
    <property type="match status" value="1"/>
</dbReference>
<dbReference type="PANTHER" id="PTHR33692">
    <property type="entry name" value="RIBOSOME MATURATION FACTOR RIMM"/>
    <property type="match status" value="1"/>
</dbReference>
<dbReference type="PANTHER" id="PTHR33692:SF1">
    <property type="entry name" value="RIBOSOME MATURATION FACTOR RIMM"/>
    <property type="match status" value="1"/>
</dbReference>
<dbReference type="Pfam" id="PF24986">
    <property type="entry name" value="PRC_RimM"/>
    <property type="match status" value="1"/>
</dbReference>
<dbReference type="Pfam" id="PF01782">
    <property type="entry name" value="RimM"/>
    <property type="match status" value="1"/>
</dbReference>
<dbReference type="SUPFAM" id="SSF50346">
    <property type="entry name" value="PRC-barrel domain"/>
    <property type="match status" value="1"/>
</dbReference>
<dbReference type="SUPFAM" id="SSF50447">
    <property type="entry name" value="Translation proteins"/>
    <property type="match status" value="1"/>
</dbReference>
<protein>
    <recommendedName>
        <fullName evidence="1">Ribosome maturation factor RimM</fullName>
    </recommendedName>
</protein>
<proteinExistence type="inferred from homology"/>
<comment type="function">
    <text evidence="1">An accessory protein needed during the final step in the assembly of 30S ribosomal subunit, possibly for assembly of the head region. Essential for efficient processing of 16S rRNA. May be needed both before and after RbfA during the maturation of 16S rRNA. It has affinity for free ribosomal 30S subunits but not for 70S ribosomes.</text>
</comment>
<comment type="subunit">
    <text evidence="1">Binds ribosomal protein uS19.</text>
</comment>
<comment type="subcellular location">
    <subcellularLocation>
        <location evidence="1">Cytoplasm</location>
    </subcellularLocation>
</comment>
<comment type="domain">
    <text evidence="1">The PRC barrel domain binds ribosomal protein uS19.</text>
</comment>
<comment type="similarity">
    <text evidence="1">Belongs to the RimM family.</text>
</comment>
<sequence length="167" mass="18766">MDLFLTGTILKPKGLKGEVKVLPVTDFPELFLSRKSYLAGKSDASVMPLNVLKASLSKGFAWLFFEGVDTLEKAEKLSGMHLFVEEKELARQPTGRAYLHELIGMKVLDGNRYEAGVISDILKMPAHEVYEVQANGRKILIPAVEEFVEEIDMAGRYMVVPRFDEFL</sequence>
<gene>
    <name evidence="1" type="primary">rimM</name>
    <name type="ordered locus">Cpha266_1523</name>
</gene>
<name>RIMM_CHLPD</name>
<evidence type="ECO:0000255" key="1">
    <source>
        <dbReference type="HAMAP-Rule" id="MF_00014"/>
    </source>
</evidence>
<feature type="chain" id="PRO_1000001161" description="Ribosome maturation factor RimM">
    <location>
        <begin position="1"/>
        <end position="167"/>
    </location>
</feature>
<feature type="domain" description="PRC barrel" evidence="1">
    <location>
        <begin position="94"/>
        <end position="166"/>
    </location>
</feature>
<keyword id="KW-0143">Chaperone</keyword>
<keyword id="KW-0963">Cytoplasm</keyword>
<keyword id="KW-1185">Reference proteome</keyword>
<keyword id="KW-0690">Ribosome biogenesis</keyword>
<keyword id="KW-0698">rRNA processing</keyword>
<reference key="1">
    <citation type="submission" date="2006-12" db="EMBL/GenBank/DDBJ databases">
        <title>Complete sequence of Chlorobium phaeobacteroides DSM 266.</title>
        <authorList>
            <consortium name="US DOE Joint Genome Institute"/>
            <person name="Copeland A."/>
            <person name="Lucas S."/>
            <person name="Lapidus A."/>
            <person name="Barry K."/>
            <person name="Detter J.C."/>
            <person name="Glavina del Rio T."/>
            <person name="Hammon N."/>
            <person name="Israni S."/>
            <person name="Pitluck S."/>
            <person name="Goltsman E."/>
            <person name="Schmutz J."/>
            <person name="Larimer F."/>
            <person name="Land M."/>
            <person name="Hauser L."/>
            <person name="Mikhailova N."/>
            <person name="Li T."/>
            <person name="Overmann J."/>
            <person name="Bryant D.A."/>
            <person name="Richardson P."/>
        </authorList>
    </citation>
    <scope>NUCLEOTIDE SEQUENCE [LARGE SCALE GENOMIC DNA]</scope>
    <source>
        <strain>DSM 266 / SMG 266 / 2430</strain>
    </source>
</reference>
<organism>
    <name type="scientific">Chlorobium phaeobacteroides (strain DSM 266 / SMG 266 / 2430)</name>
    <dbReference type="NCBI Taxonomy" id="290317"/>
    <lineage>
        <taxon>Bacteria</taxon>
        <taxon>Pseudomonadati</taxon>
        <taxon>Chlorobiota</taxon>
        <taxon>Chlorobiia</taxon>
        <taxon>Chlorobiales</taxon>
        <taxon>Chlorobiaceae</taxon>
        <taxon>Chlorobium/Pelodictyon group</taxon>
        <taxon>Chlorobium</taxon>
    </lineage>
</organism>
<accession>A1BGL8</accession>